<gene>
    <name type="primary">MT-CYB</name>
    <name type="synonym">COB</name>
    <name type="synonym">CYTB</name>
    <name type="synonym">MTCYB</name>
</gene>
<name>CYB_ELIMA</name>
<keyword id="KW-0249">Electron transport</keyword>
<keyword id="KW-0349">Heme</keyword>
<keyword id="KW-0408">Iron</keyword>
<keyword id="KW-0472">Membrane</keyword>
<keyword id="KW-0479">Metal-binding</keyword>
<keyword id="KW-0496">Mitochondrion</keyword>
<keyword id="KW-0999">Mitochondrion inner membrane</keyword>
<keyword id="KW-0679">Respiratory chain</keyword>
<keyword id="KW-0812">Transmembrane</keyword>
<keyword id="KW-1133">Transmembrane helix</keyword>
<keyword id="KW-0813">Transport</keyword>
<keyword id="KW-0830">Ubiquinone</keyword>
<organism>
    <name type="scientific">Eliurus majori</name>
    <name type="common">Major's tufted-tailed rat</name>
    <dbReference type="NCBI Taxonomy" id="107283"/>
    <lineage>
        <taxon>Eukaryota</taxon>
        <taxon>Metazoa</taxon>
        <taxon>Chordata</taxon>
        <taxon>Craniata</taxon>
        <taxon>Vertebrata</taxon>
        <taxon>Euteleostomi</taxon>
        <taxon>Mammalia</taxon>
        <taxon>Eutheria</taxon>
        <taxon>Euarchontoglires</taxon>
        <taxon>Glires</taxon>
        <taxon>Rodentia</taxon>
        <taxon>Myomorpha</taxon>
        <taxon>Muroidea</taxon>
        <taxon>Nesomyidae</taxon>
        <taxon>Nesomyinae</taxon>
        <taxon>Eliurus</taxon>
    </lineage>
</organism>
<geneLocation type="mitochondrion"/>
<accession>Q9T4R0</accession>
<accession>Q9T7R5</accession>
<accession>Q9T7R7</accession>
<sequence length="380" mass="42765">MTNIRKSHPLLKIINHSFIDLPTPSNISSWWNFGSLLGICLILQIATGLFLAMHYTSDTTTAFSSVTHICRDVNYGWLIRYLHANGASMFFICLFIHVGRGMYYGSYMSIETWNMGIILLFAVMATAFMGYVLPWGQMSFWGATVITNLLSAIPYIGTTLVEWIWGGFSVDKATLTRFFAFHFILPFIIVALVMVHLLFLHETGSNNPSGLNSDADKIPFHPYYTIKDILGVLLLFLFLISLVLFAPDLLGDPDNYTPANPLNTPPHIKPEWYFLFAYAILRSIPNKLGGVLALILSILVLALIPHLHTSKLQSLMFRPLTQALYWILVADLLILTWIGGQPVEYPFIIIGQLASVLYFAIILIFMPMAGMIEDSILKMD</sequence>
<dbReference type="EMBL" id="AF160549">
    <property type="protein sequence ID" value="AAF15165.1"/>
    <property type="molecule type" value="Genomic_DNA"/>
</dbReference>
<dbReference type="EMBL" id="AF160550">
    <property type="protein sequence ID" value="AAF15166.1"/>
    <property type="molecule type" value="Genomic_DNA"/>
</dbReference>
<dbReference type="EMBL" id="AF160552">
    <property type="protein sequence ID" value="AAF15168.1"/>
    <property type="molecule type" value="Genomic_DNA"/>
</dbReference>
<dbReference type="EMBL" id="AF160554">
    <property type="protein sequence ID" value="AAF15170.1"/>
    <property type="molecule type" value="Genomic_DNA"/>
</dbReference>
<dbReference type="EMBL" id="AF160555">
    <property type="protein sequence ID" value="AAF15171.1"/>
    <property type="molecule type" value="Genomic_DNA"/>
</dbReference>
<dbReference type="EMBL" id="AF160558">
    <property type="protein sequence ID" value="AAF15174.1"/>
    <property type="molecule type" value="Genomic_DNA"/>
</dbReference>
<dbReference type="EMBL" id="AF160559">
    <property type="protein sequence ID" value="AAF15175.1"/>
    <property type="molecule type" value="Genomic_DNA"/>
</dbReference>
<dbReference type="EMBL" id="AF160560">
    <property type="protein sequence ID" value="AAF15176.1"/>
    <property type="molecule type" value="Genomic_DNA"/>
</dbReference>
<dbReference type="SMR" id="Q9T4R0"/>
<dbReference type="GO" id="GO:0005743">
    <property type="term" value="C:mitochondrial inner membrane"/>
    <property type="evidence" value="ECO:0007669"/>
    <property type="project" value="UniProtKB-SubCell"/>
</dbReference>
<dbReference type="GO" id="GO:0045275">
    <property type="term" value="C:respiratory chain complex III"/>
    <property type="evidence" value="ECO:0007669"/>
    <property type="project" value="InterPro"/>
</dbReference>
<dbReference type="GO" id="GO:0046872">
    <property type="term" value="F:metal ion binding"/>
    <property type="evidence" value="ECO:0007669"/>
    <property type="project" value="UniProtKB-KW"/>
</dbReference>
<dbReference type="GO" id="GO:0008121">
    <property type="term" value="F:ubiquinol-cytochrome-c reductase activity"/>
    <property type="evidence" value="ECO:0007669"/>
    <property type="project" value="InterPro"/>
</dbReference>
<dbReference type="GO" id="GO:0006122">
    <property type="term" value="P:mitochondrial electron transport, ubiquinol to cytochrome c"/>
    <property type="evidence" value="ECO:0007669"/>
    <property type="project" value="TreeGrafter"/>
</dbReference>
<dbReference type="CDD" id="cd00290">
    <property type="entry name" value="cytochrome_b_C"/>
    <property type="match status" value="1"/>
</dbReference>
<dbReference type="CDD" id="cd00284">
    <property type="entry name" value="Cytochrome_b_N"/>
    <property type="match status" value="1"/>
</dbReference>
<dbReference type="FunFam" id="1.20.810.10:FF:000002">
    <property type="entry name" value="Cytochrome b"/>
    <property type="match status" value="1"/>
</dbReference>
<dbReference type="Gene3D" id="1.20.810.10">
    <property type="entry name" value="Cytochrome Bc1 Complex, Chain C"/>
    <property type="match status" value="1"/>
</dbReference>
<dbReference type="InterPro" id="IPR005798">
    <property type="entry name" value="Cyt_b/b6_C"/>
</dbReference>
<dbReference type="InterPro" id="IPR036150">
    <property type="entry name" value="Cyt_b/b6_C_sf"/>
</dbReference>
<dbReference type="InterPro" id="IPR005797">
    <property type="entry name" value="Cyt_b/b6_N"/>
</dbReference>
<dbReference type="InterPro" id="IPR027387">
    <property type="entry name" value="Cytb/b6-like_sf"/>
</dbReference>
<dbReference type="InterPro" id="IPR030689">
    <property type="entry name" value="Cytochrome_b"/>
</dbReference>
<dbReference type="InterPro" id="IPR048260">
    <property type="entry name" value="Cytochrome_b_C_euk/bac"/>
</dbReference>
<dbReference type="InterPro" id="IPR048259">
    <property type="entry name" value="Cytochrome_b_N_euk/bac"/>
</dbReference>
<dbReference type="InterPro" id="IPR016174">
    <property type="entry name" value="Di-haem_cyt_TM"/>
</dbReference>
<dbReference type="PANTHER" id="PTHR19271">
    <property type="entry name" value="CYTOCHROME B"/>
    <property type="match status" value="1"/>
</dbReference>
<dbReference type="PANTHER" id="PTHR19271:SF16">
    <property type="entry name" value="CYTOCHROME B"/>
    <property type="match status" value="1"/>
</dbReference>
<dbReference type="Pfam" id="PF00032">
    <property type="entry name" value="Cytochrom_B_C"/>
    <property type="match status" value="1"/>
</dbReference>
<dbReference type="Pfam" id="PF00033">
    <property type="entry name" value="Cytochrome_B"/>
    <property type="match status" value="1"/>
</dbReference>
<dbReference type="PIRSF" id="PIRSF038885">
    <property type="entry name" value="COB"/>
    <property type="match status" value="1"/>
</dbReference>
<dbReference type="SUPFAM" id="SSF81648">
    <property type="entry name" value="a domain/subunit of cytochrome bc1 complex (Ubiquinol-cytochrome c reductase)"/>
    <property type="match status" value="1"/>
</dbReference>
<dbReference type="SUPFAM" id="SSF81342">
    <property type="entry name" value="Transmembrane di-heme cytochromes"/>
    <property type="match status" value="1"/>
</dbReference>
<dbReference type="PROSITE" id="PS51003">
    <property type="entry name" value="CYTB_CTER"/>
    <property type="match status" value="1"/>
</dbReference>
<dbReference type="PROSITE" id="PS51002">
    <property type="entry name" value="CYTB_NTER"/>
    <property type="match status" value="1"/>
</dbReference>
<evidence type="ECO:0000250" key="1"/>
<evidence type="ECO:0000250" key="2">
    <source>
        <dbReference type="UniProtKB" id="P00157"/>
    </source>
</evidence>
<evidence type="ECO:0000255" key="3">
    <source>
        <dbReference type="PROSITE-ProRule" id="PRU00967"/>
    </source>
</evidence>
<evidence type="ECO:0000255" key="4">
    <source>
        <dbReference type="PROSITE-ProRule" id="PRU00968"/>
    </source>
</evidence>
<protein>
    <recommendedName>
        <fullName>Cytochrome b</fullName>
    </recommendedName>
    <alternativeName>
        <fullName>Complex III subunit 3</fullName>
    </alternativeName>
    <alternativeName>
        <fullName>Complex III subunit III</fullName>
    </alternativeName>
    <alternativeName>
        <fullName>Cytochrome b-c1 complex subunit 3</fullName>
    </alternativeName>
    <alternativeName>
        <fullName>Ubiquinol-cytochrome-c reductase complex cytochrome b subunit</fullName>
    </alternativeName>
</protein>
<proteinExistence type="inferred from homology"/>
<feature type="chain" id="PRO_0000060912" description="Cytochrome b">
    <location>
        <begin position="1"/>
        <end position="380"/>
    </location>
</feature>
<feature type="transmembrane region" description="Helical" evidence="2">
    <location>
        <begin position="33"/>
        <end position="53"/>
    </location>
</feature>
<feature type="transmembrane region" description="Helical" evidence="2">
    <location>
        <begin position="77"/>
        <end position="98"/>
    </location>
</feature>
<feature type="transmembrane region" description="Helical" evidence="2">
    <location>
        <begin position="113"/>
        <end position="133"/>
    </location>
</feature>
<feature type="transmembrane region" description="Helical" evidence="2">
    <location>
        <begin position="178"/>
        <end position="198"/>
    </location>
</feature>
<feature type="transmembrane region" description="Helical" evidence="2">
    <location>
        <begin position="226"/>
        <end position="246"/>
    </location>
</feature>
<feature type="transmembrane region" description="Helical" evidence="2">
    <location>
        <begin position="288"/>
        <end position="308"/>
    </location>
</feature>
<feature type="transmembrane region" description="Helical" evidence="2">
    <location>
        <begin position="320"/>
        <end position="340"/>
    </location>
</feature>
<feature type="transmembrane region" description="Helical" evidence="2">
    <location>
        <begin position="347"/>
        <end position="367"/>
    </location>
</feature>
<feature type="binding site" description="axial binding residue" evidence="2">
    <location>
        <position position="83"/>
    </location>
    <ligand>
        <name>heme b</name>
        <dbReference type="ChEBI" id="CHEBI:60344"/>
        <label>b562</label>
    </ligand>
    <ligandPart>
        <name>Fe</name>
        <dbReference type="ChEBI" id="CHEBI:18248"/>
    </ligandPart>
</feature>
<feature type="binding site" description="axial binding residue" evidence="2">
    <location>
        <position position="97"/>
    </location>
    <ligand>
        <name>heme b</name>
        <dbReference type="ChEBI" id="CHEBI:60344"/>
        <label>b566</label>
    </ligand>
    <ligandPart>
        <name>Fe</name>
        <dbReference type="ChEBI" id="CHEBI:18248"/>
    </ligandPart>
</feature>
<feature type="binding site" description="axial binding residue" evidence="2">
    <location>
        <position position="182"/>
    </location>
    <ligand>
        <name>heme b</name>
        <dbReference type="ChEBI" id="CHEBI:60344"/>
        <label>b562</label>
    </ligand>
    <ligandPart>
        <name>Fe</name>
        <dbReference type="ChEBI" id="CHEBI:18248"/>
    </ligandPart>
</feature>
<feature type="binding site" description="axial binding residue" evidence="2">
    <location>
        <position position="196"/>
    </location>
    <ligand>
        <name>heme b</name>
        <dbReference type="ChEBI" id="CHEBI:60344"/>
        <label>b566</label>
    </ligand>
    <ligandPart>
        <name>Fe</name>
        <dbReference type="ChEBI" id="CHEBI:18248"/>
    </ligandPart>
</feature>
<feature type="binding site" evidence="2">
    <location>
        <position position="201"/>
    </location>
    <ligand>
        <name>a ubiquinone</name>
        <dbReference type="ChEBI" id="CHEBI:16389"/>
    </ligand>
</feature>
<feature type="sequence variant" description="In strain: Isolate Emaj614.">
    <original>I</original>
    <variation>V</variation>
    <location>
        <position position="39"/>
    </location>
</feature>
<feature type="sequence variant" description="In strain: Isolate Emaj556 and Isolate Emaj614.">
    <original>I</original>
    <variation>V</variation>
    <location>
        <position position="42"/>
    </location>
</feature>
<feature type="sequence variant" description="In strain: Isolate Emaj614.">
    <original>I</original>
    <variation>M</variation>
    <location>
        <position position="240"/>
    </location>
</feature>
<feature type="sequence variant" description="In strain: Isolate Emaj614.">
    <original>I</original>
    <variation>V</variation>
    <location>
        <position position="327"/>
    </location>
</feature>
<feature type="sequence variant" description="In strain: Isolate Emaj614.">
    <original>I</original>
    <variation>T</variation>
    <location>
        <position position="334"/>
    </location>
</feature>
<feature type="sequence variant" description="In strain: Isolate Emaj614.">
    <original>I</original>
    <variation>A</variation>
    <location>
        <position position="349"/>
    </location>
</feature>
<feature type="sequence variant" description="In strain: Isolate Emaj614.">
    <original>V</original>
    <variation>I</variation>
    <location>
        <position position="356"/>
    </location>
</feature>
<comment type="function">
    <text evidence="2">Component of the ubiquinol-cytochrome c reductase complex (complex III or cytochrome b-c1 complex) that is part of the mitochondrial respiratory chain. The b-c1 complex mediates electron transfer from ubiquinol to cytochrome c. Contributes to the generation of a proton gradient across the mitochondrial membrane that is then used for ATP synthesis.</text>
</comment>
<comment type="cofactor">
    <cofactor evidence="2">
        <name>heme b</name>
        <dbReference type="ChEBI" id="CHEBI:60344"/>
    </cofactor>
    <text evidence="2">Binds 2 heme b groups non-covalently.</text>
</comment>
<comment type="subunit">
    <text evidence="2">The cytochrome bc1 complex contains 11 subunits: 3 respiratory subunits (MT-CYB, CYC1 and UQCRFS1), 2 core proteins (UQCRC1 and UQCRC2) and 6 low-molecular weight proteins (UQCRH/QCR6, UQCRB/QCR7, UQCRQ/QCR8, UQCR10/QCR9, UQCR11/QCR10 and a cleavage product of UQCRFS1). This cytochrome bc1 complex then forms a dimer.</text>
</comment>
<comment type="subcellular location">
    <subcellularLocation>
        <location evidence="2">Mitochondrion inner membrane</location>
        <topology evidence="2">Multi-pass membrane protein</topology>
    </subcellularLocation>
</comment>
<comment type="miscellaneous">
    <text evidence="1">Heme 1 (or BL or b562) is low-potential and absorbs at about 562 nm, and heme 2 (or BH or b566) is high-potential and absorbs at about 566 nm.</text>
</comment>
<comment type="similarity">
    <text evidence="3 4">Belongs to the cytochrome b family.</text>
</comment>
<comment type="caution">
    <text evidence="2">The full-length protein contains only eight transmembrane helices, not nine as predicted by bioinformatics tools.</text>
</comment>
<reference key="1">
    <citation type="journal article" date="1999" name="Cladistics">
        <title>Molecular phylogeny and biogeography of Madagascar's native rodents (Muridae: Nesomyinae): a test of the single origin hypothesis.</title>
        <authorList>
            <person name="Jansa S.A."/>
            <person name="Goodman S.M."/>
            <person name="Tucker P.K."/>
        </authorList>
    </citation>
    <scope>NUCLEOTIDE SEQUENCE [GENOMIC DNA]</scope>
    <source>
        <strain>Isolate Emaj443</strain>
        <strain>Isolate Emaj444</strain>
        <strain>Isolate Emaj556</strain>
        <strain>Isolate Emaj614</strain>
        <strain>Isolate Emaj617</strain>
        <strain>Isolate Emaj639</strain>
        <strain>Isolate Emaj641</strain>
        <strain>Isolate Emaj642</strain>
    </source>
</reference>